<organism>
    <name type="scientific">Scheffersomyces stipitis (strain ATCC 58785 / CBS 6054 / NBRC 10063 / NRRL Y-11545)</name>
    <name type="common">Yeast</name>
    <name type="synonym">Pichia stipitis</name>
    <dbReference type="NCBI Taxonomy" id="322104"/>
    <lineage>
        <taxon>Eukaryota</taxon>
        <taxon>Fungi</taxon>
        <taxon>Dikarya</taxon>
        <taxon>Ascomycota</taxon>
        <taxon>Saccharomycotina</taxon>
        <taxon>Pichiomycetes</taxon>
        <taxon>Debaryomycetaceae</taxon>
        <taxon>Scheffersomyces</taxon>
    </lineage>
</organism>
<protein>
    <recommendedName>
        <fullName>DNA-directed RNA polymerase III subunit RPC3</fullName>
        <shortName>RNA polymerase III subunit C3</shortName>
    </recommendedName>
</protein>
<name>RPC3_PICST</name>
<gene>
    <name type="primary">RPC82</name>
    <name type="synonym">RPC3</name>
    <name type="ORF">PICST_82840</name>
</gene>
<proteinExistence type="inferred from homology"/>
<reference key="1">
    <citation type="journal article" date="2007" name="Nat. Biotechnol.">
        <title>Genome sequence of the lignocellulose-bioconverting and xylose-fermenting yeast Pichia stipitis.</title>
        <authorList>
            <person name="Jeffries T.W."/>
            <person name="Grigoriev I.V."/>
            <person name="Grimwood J."/>
            <person name="Laplaza J.M."/>
            <person name="Aerts A."/>
            <person name="Salamov A."/>
            <person name="Schmutz J."/>
            <person name="Lindquist E."/>
            <person name="Dehal P."/>
            <person name="Shapiro H."/>
            <person name="Jin Y.-S."/>
            <person name="Passoth V."/>
            <person name="Richardson P.M."/>
        </authorList>
    </citation>
    <scope>NUCLEOTIDE SEQUENCE [LARGE SCALE GENOMIC DNA]</scope>
    <source>
        <strain>ATCC 58785 / CBS 6054 / NBRC 10063 / NRRL Y-11545</strain>
    </source>
</reference>
<accession>A3LQX9</accession>
<sequence>MDIGDLPEASKTQSPKSYLYTSIARNHLGDVAALIISCLISYGRLTATDISHRTKIPVKKVKSALVSLIQMNCIFYWRESGSKQVFYSFNETGILVFLHSGDIISHVTTHYGEDSAEIVQNILVNGHIRIEDYVNNIDDEEKKLDIQTLFFRLFTDRWIVRLQPFNFNPVDDIWNQLYQETLKNTPRTSTTSEVKRVAEAKEKTKTKFINLIESGQSPKDLYLTQDGIKRLNPALVVTFNLSRFQKHLRTTALVSLAKSRVGLLSARIYESALKLVEASSPDLTHPFLQISGLINDPEEARFFVNSIENKLVDEKKTVFNVRDLGRLLPHDLDLRNSILTYNFVKHNLTPKKRSASNGDDERPTKKIKTEDSDDIAESLESNGTVQIESNGNGNSISLIQHHLKLLSSGSGAQLLIEITPGSYTVPYASLLKYLKQYNFETLVKTTLGPNSFRILRCLKSLKIGDEKTISNSVLLKEKTVRNEIYKLLKANMLEVQEVPRSADRAASKTFYLFRHKEFYSYEFLCNSLIFSMAEILSNIQAFREDHKILLEKCEREDVKGHEEELLLESELKTLKSLQTRQVSNTVRFNRIKSLYEIYQ</sequence>
<dbReference type="EMBL" id="CP000497">
    <property type="protein sequence ID" value="ABN65635.1"/>
    <property type="molecule type" value="Genomic_DNA"/>
</dbReference>
<dbReference type="RefSeq" id="XP_001383664.1">
    <property type="nucleotide sequence ID" value="XM_001383627.1"/>
</dbReference>
<dbReference type="SMR" id="A3LQX9"/>
<dbReference type="FunCoup" id="A3LQX9">
    <property type="interactions" value="513"/>
</dbReference>
<dbReference type="STRING" id="322104.A3LQX9"/>
<dbReference type="GeneID" id="4837895"/>
<dbReference type="KEGG" id="pic:PICST_82840"/>
<dbReference type="eggNOG" id="KOG2587">
    <property type="taxonomic scope" value="Eukaryota"/>
</dbReference>
<dbReference type="HOGENOM" id="CLU_010734_0_0_1"/>
<dbReference type="InParanoid" id="A3LQX9"/>
<dbReference type="OMA" id="KHRFVRH"/>
<dbReference type="OrthoDB" id="272392at2759"/>
<dbReference type="Proteomes" id="UP000002258">
    <property type="component" value="Chromosome 3"/>
</dbReference>
<dbReference type="GO" id="GO:0005666">
    <property type="term" value="C:RNA polymerase III complex"/>
    <property type="evidence" value="ECO:0007669"/>
    <property type="project" value="EnsemblFungi"/>
</dbReference>
<dbReference type="GO" id="GO:0003899">
    <property type="term" value="F:DNA-directed RNA polymerase activity"/>
    <property type="evidence" value="ECO:0007669"/>
    <property type="project" value="EnsemblFungi"/>
</dbReference>
<dbReference type="GO" id="GO:0003697">
    <property type="term" value="F:single-stranded DNA binding"/>
    <property type="evidence" value="ECO:0007669"/>
    <property type="project" value="InterPro"/>
</dbReference>
<dbReference type="GO" id="GO:0006386">
    <property type="term" value="P:termination of RNA polymerase III transcription"/>
    <property type="evidence" value="ECO:0007669"/>
    <property type="project" value="EnsemblFungi"/>
</dbReference>
<dbReference type="GO" id="GO:0006384">
    <property type="term" value="P:transcription initiation at RNA polymerase III promoter"/>
    <property type="evidence" value="ECO:0007669"/>
    <property type="project" value="EnsemblFungi"/>
</dbReference>
<dbReference type="GO" id="GO:0042797">
    <property type="term" value="P:tRNA transcription by RNA polymerase III"/>
    <property type="evidence" value="ECO:0007669"/>
    <property type="project" value="EnsemblFungi"/>
</dbReference>
<dbReference type="Gene3D" id="1.10.10.10">
    <property type="entry name" value="Winged helix-like DNA-binding domain superfamily/Winged helix DNA-binding domain"/>
    <property type="match status" value="3"/>
</dbReference>
<dbReference type="InterPro" id="IPR055207">
    <property type="entry name" value="POLR3C_WHD"/>
</dbReference>
<dbReference type="InterPro" id="IPR013197">
    <property type="entry name" value="RNA_pol_III_RPC82-rel_HTH"/>
</dbReference>
<dbReference type="InterPro" id="IPR008806">
    <property type="entry name" value="RNA_pol_III_Rpc82_C"/>
</dbReference>
<dbReference type="InterPro" id="IPR039748">
    <property type="entry name" value="RPC3"/>
</dbReference>
<dbReference type="InterPro" id="IPR036388">
    <property type="entry name" value="WH-like_DNA-bd_sf"/>
</dbReference>
<dbReference type="PANTHER" id="PTHR12949:SF0">
    <property type="entry name" value="DNA-DIRECTED RNA POLYMERASE III SUBUNIT RPC3"/>
    <property type="match status" value="1"/>
</dbReference>
<dbReference type="PANTHER" id="PTHR12949">
    <property type="entry name" value="RNA POLYMERASE III DNA DIRECTED -RELATED"/>
    <property type="match status" value="1"/>
</dbReference>
<dbReference type="Pfam" id="PF08221">
    <property type="entry name" value="HTH_9"/>
    <property type="match status" value="1"/>
</dbReference>
<dbReference type="Pfam" id="PF22536">
    <property type="entry name" value="POLR3C_WHD"/>
    <property type="match status" value="1"/>
</dbReference>
<dbReference type="Pfam" id="PF05645">
    <property type="entry name" value="RNA_pol_Rpc82"/>
    <property type="match status" value="1"/>
</dbReference>
<dbReference type="Pfam" id="PF20912">
    <property type="entry name" value="RPC3_helical"/>
    <property type="match status" value="1"/>
</dbReference>
<evidence type="ECO:0000250" key="1"/>
<evidence type="ECO:0000256" key="2">
    <source>
        <dbReference type="SAM" id="MobiDB-lite"/>
    </source>
</evidence>
<evidence type="ECO:0000305" key="3"/>
<feature type="chain" id="PRO_0000351040" description="DNA-directed RNA polymerase III subunit RPC3">
    <location>
        <begin position="1"/>
        <end position="599"/>
    </location>
</feature>
<feature type="region of interest" description="Disordered" evidence="2">
    <location>
        <begin position="350"/>
        <end position="375"/>
    </location>
</feature>
<feature type="region of interest" description="Leucine-zipper">
    <location>
        <begin position="528"/>
        <end position="549"/>
    </location>
</feature>
<feature type="compositionally biased region" description="Basic and acidic residues" evidence="2">
    <location>
        <begin position="359"/>
        <end position="370"/>
    </location>
</feature>
<keyword id="KW-0240">DNA-directed RNA polymerase</keyword>
<keyword id="KW-0539">Nucleus</keyword>
<keyword id="KW-1185">Reference proteome</keyword>
<keyword id="KW-0804">Transcription</keyword>
<keyword id="KW-0862">Zinc</keyword>
<comment type="function">
    <text evidence="1">DNA-dependent RNA polymerase catalyzes the transcription of DNA into RNA using the four ribonucleoside triphosphates as substrates. Specific core component of RNA polymerase III which synthesizes small RNAs, such as 5S rRNA and tRNAs (By similarity).</text>
</comment>
<comment type="subunit">
    <text evidence="1">Component of the RNA polymerase III (Pol III) complex consisting of 17 subunits.</text>
</comment>
<comment type="subcellular location">
    <subcellularLocation>
        <location evidence="1">Nucleus</location>
    </subcellularLocation>
</comment>
<comment type="similarity">
    <text evidence="3">Belongs to the RNA polymerase beta chain family.</text>
</comment>